<feature type="chain" id="PRO_1000024212" description="Dihydroorotate dehydrogenase (quinone)">
    <location>
        <begin position="1"/>
        <end position="362"/>
    </location>
</feature>
<feature type="active site" description="Nucleophile" evidence="1">
    <location>
        <position position="173"/>
    </location>
</feature>
<feature type="binding site" evidence="1">
    <location>
        <begin position="62"/>
        <end position="66"/>
    </location>
    <ligand>
        <name>FMN</name>
        <dbReference type="ChEBI" id="CHEBI:58210"/>
    </ligand>
</feature>
<feature type="binding site" evidence="1">
    <location>
        <position position="66"/>
    </location>
    <ligand>
        <name>substrate</name>
    </ligand>
</feature>
<feature type="binding site" evidence="1">
    <location>
        <position position="86"/>
    </location>
    <ligand>
        <name>FMN</name>
        <dbReference type="ChEBI" id="CHEBI:58210"/>
    </ligand>
</feature>
<feature type="binding site" evidence="1">
    <location>
        <begin position="111"/>
        <end position="115"/>
    </location>
    <ligand>
        <name>substrate</name>
    </ligand>
</feature>
<feature type="binding site" evidence="1">
    <location>
        <position position="139"/>
    </location>
    <ligand>
        <name>FMN</name>
        <dbReference type="ChEBI" id="CHEBI:58210"/>
    </ligand>
</feature>
<feature type="binding site" evidence="1">
    <location>
        <position position="170"/>
    </location>
    <ligand>
        <name>FMN</name>
        <dbReference type="ChEBI" id="CHEBI:58210"/>
    </ligand>
</feature>
<feature type="binding site" evidence="1">
    <location>
        <position position="170"/>
    </location>
    <ligand>
        <name>substrate</name>
    </ligand>
</feature>
<feature type="binding site" evidence="1">
    <location>
        <position position="175"/>
    </location>
    <ligand>
        <name>substrate</name>
    </ligand>
</feature>
<feature type="binding site" evidence="1">
    <location>
        <position position="215"/>
    </location>
    <ligand>
        <name>FMN</name>
        <dbReference type="ChEBI" id="CHEBI:58210"/>
    </ligand>
</feature>
<feature type="binding site" evidence="1">
    <location>
        <position position="243"/>
    </location>
    <ligand>
        <name>FMN</name>
        <dbReference type="ChEBI" id="CHEBI:58210"/>
    </ligand>
</feature>
<feature type="binding site" evidence="1">
    <location>
        <begin position="244"/>
        <end position="245"/>
    </location>
    <ligand>
        <name>substrate</name>
    </ligand>
</feature>
<feature type="binding site" evidence="1">
    <location>
        <position position="266"/>
    </location>
    <ligand>
        <name>FMN</name>
        <dbReference type="ChEBI" id="CHEBI:58210"/>
    </ligand>
</feature>
<feature type="binding site" evidence="1">
    <location>
        <position position="295"/>
    </location>
    <ligand>
        <name>FMN</name>
        <dbReference type="ChEBI" id="CHEBI:58210"/>
    </ligand>
</feature>
<feature type="binding site" evidence="1">
    <location>
        <begin position="316"/>
        <end position="317"/>
    </location>
    <ligand>
        <name>FMN</name>
        <dbReference type="ChEBI" id="CHEBI:58210"/>
    </ligand>
</feature>
<evidence type="ECO:0000255" key="1">
    <source>
        <dbReference type="HAMAP-Rule" id="MF_00225"/>
    </source>
</evidence>
<proteinExistence type="inferred from homology"/>
<sequence length="362" mass="38969">MIDPFQRLARRGLFLFDPETAHGMSIAALKSGLVPACQIAPDPRLRQTIAGLTFENPLGMAAGYDKNAEVPEALLKLGFGFTEIGTVTPKPQSGNPRPRIFRLVEDEAVINRLGFNNEGHEAAFRRLAELTGTGIFGVNIGANKDSEDRIADYVAGIRRFHSVARYFTANISSPNTPGLRDLQARESLAALLSAVLAVRDEMAEKSGRKIPVFLKIAPDLTEEGMDDIAAEALAHPLDGLIVSNTTLSRDGLKDQRQAKEAGGLSGVPLFEKSTAVLARMRKRVGPDLPIIGVGGVSSAETALEKIRAGADLVQLYSCMVYEGPGLPGTIVRGLSALLDREKAGSIRALRDSRLDYWAARKV</sequence>
<reference key="1">
    <citation type="journal article" date="2006" name="Proc. Natl. Acad. Sci. U.S.A.">
        <title>The partitioned Rhizobium etli genome: genetic and metabolic redundancy in seven interacting replicons.</title>
        <authorList>
            <person name="Gonzalez V."/>
            <person name="Santamaria R.I."/>
            <person name="Bustos P."/>
            <person name="Hernandez-Gonzalez I."/>
            <person name="Medrano-Soto A."/>
            <person name="Moreno-Hagelsieb G."/>
            <person name="Janga S.C."/>
            <person name="Ramirez M.A."/>
            <person name="Jimenez-Jacinto V."/>
            <person name="Collado-Vides J."/>
            <person name="Davila G."/>
        </authorList>
    </citation>
    <scope>NUCLEOTIDE SEQUENCE [LARGE SCALE GENOMIC DNA]</scope>
    <source>
        <strain>ATCC 51251 / DSM 11541 / JCM 21823 / NBRC 15573 / CFN 42</strain>
    </source>
</reference>
<comment type="function">
    <text evidence="1">Catalyzes the conversion of dihydroorotate to orotate with quinone as electron acceptor.</text>
</comment>
<comment type="catalytic activity">
    <reaction evidence="1">
        <text>(S)-dihydroorotate + a quinone = orotate + a quinol</text>
        <dbReference type="Rhea" id="RHEA:30187"/>
        <dbReference type="ChEBI" id="CHEBI:24646"/>
        <dbReference type="ChEBI" id="CHEBI:30839"/>
        <dbReference type="ChEBI" id="CHEBI:30864"/>
        <dbReference type="ChEBI" id="CHEBI:132124"/>
        <dbReference type="EC" id="1.3.5.2"/>
    </reaction>
</comment>
<comment type="cofactor">
    <cofactor evidence="1">
        <name>FMN</name>
        <dbReference type="ChEBI" id="CHEBI:58210"/>
    </cofactor>
    <text evidence="1">Binds 1 FMN per subunit.</text>
</comment>
<comment type="pathway">
    <text evidence="1">Pyrimidine metabolism; UMP biosynthesis via de novo pathway; orotate from (S)-dihydroorotate (quinone route): step 1/1.</text>
</comment>
<comment type="subunit">
    <text evidence="1">Monomer.</text>
</comment>
<comment type="subcellular location">
    <subcellularLocation>
        <location evidence="1">Cell membrane</location>
        <topology evidence="1">Peripheral membrane protein</topology>
    </subcellularLocation>
</comment>
<comment type="similarity">
    <text evidence="1">Belongs to the dihydroorotate dehydrogenase family. Type 2 subfamily.</text>
</comment>
<name>PYRD_RHIEC</name>
<gene>
    <name evidence="1" type="primary">pyrD</name>
    <name type="ordered locus">RHE_CH00540</name>
</gene>
<accession>Q2KCS8</accession>
<dbReference type="EC" id="1.3.5.2" evidence="1"/>
<dbReference type="EMBL" id="CP000133">
    <property type="protein sequence ID" value="ABC89358.1"/>
    <property type="molecule type" value="Genomic_DNA"/>
</dbReference>
<dbReference type="RefSeq" id="WP_011423911.1">
    <property type="nucleotide sequence ID" value="NC_007761.1"/>
</dbReference>
<dbReference type="SMR" id="Q2KCS8"/>
<dbReference type="KEGG" id="ret:RHE_CH00540"/>
<dbReference type="eggNOG" id="COG0167">
    <property type="taxonomic scope" value="Bacteria"/>
</dbReference>
<dbReference type="HOGENOM" id="CLU_013640_2_1_5"/>
<dbReference type="OrthoDB" id="9802377at2"/>
<dbReference type="UniPathway" id="UPA00070">
    <property type="reaction ID" value="UER00946"/>
</dbReference>
<dbReference type="Proteomes" id="UP000001936">
    <property type="component" value="Chromosome"/>
</dbReference>
<dbReference type="GO" id="GO:0005737">
    <property type="term" value="C:cytoplasm"/>
    <property type="evidence" value="ECO:0007669"/>
    <property type="project" value="InterPro"/>
</dbReference>
<dbReference type="GO" id="GO:0005886">
    <property type="term" value="C:plasma membrane"/>
    <property type="evidence" value="ECO:0007669"/>
    <property type="project" value="UniProtKB-SubCell"/>
</dbReference>
<dbReference type="GO" id="GO:0106430">
    <property type="term" value="F:dihydroorotate dehydrogenase (quinone) activity"/>
    <property type="evidence" value="ECO:0007669"/>
    <property type="project" value="UniProtKB-EC"/>
</dbReference>
<dbReference type="GO" id="GO:0006207">
    <property type="term" value="P:'de novo' pyrimidine nucleobase biosynthetic process"/>
    <property type="evidence" value="ECO:0007669"/>
    <property type="project" value="InterPro"/>
</dbReference>
<dbReference type="GO" id="GO:0044205">
    <property type="term" value="P:'de novo' UMP biosynthetic process"/>
    <property type="evidence" value="ECO:0007669"/>
    <property type="project" value="UniProtKB-UniRule"/>
</dbReference>
<dbReference type="CDD" id="cd04738">
    <property type="entry name" value="DHOD_2_like"/>
    <property type="match status" value="1"/>
</dbReference>
<dbReference type="Gene3D" id="3.20.20.70">
    <property type="entry name" value="Aldolase class I"/>
    <property type="match status" value="1"/>
</dbReference>
<dbReference type="HAMAP" id="MF_00225">
    <property type="entry name" value="DHO_dh_type2"/>
    <property type="match status" value="1"/>
</dbReference>
<dbReference type="InterPro" id="IPR013785">
    <property type="entry name" value="Aldolase_TIM"/>
</dbReference>
<dbReference type="InterPro" id="IPR050074">
    <property type="entry name" value="DHO_dehydrogenase"/>
</dbReference>
<dbReference type="InterPro" id="IPR005719">
    <property type="entry name" value="Dihydroorotate_DH_2"/>
</dbReference>
<dbReference type="InterPro" id="IPR005720">
    <property type="entry name" value="Dihydroorotate_DH_cat"/>
</dbReference>
<dbReference type="InterPro" id="IPR001295">
    <property type="entry name" value="Dihydroorotate_DH_CS"/>
</dbReference>
<dbReference type="NCBIfam" id="NF003645">
    <property type="entry name" value="PRK05286.1-2"/>
    <property type="match status" value="1"/>
</dbReference>
<dbReference type="NCBIfam" id="NF003652">
    <property type="entry name" value="PRK05286.2-5"/>
    <property type="match status" value="1"/>
</dbReference>
<dbReference type="NCBIfam" id="TIGR01036">
    <property type="entry name" value="pyrD_sub2"/>
    <property type="match status" value="1"/>
</dbReference>
<dbReference type="PANTHER" id="PTHR48109:SF4">
    <property type="entry name" value="DIHYDROOROTATE DEHYDROGENASE (QUINONE), MITOCHONDRIAL"/>
    <property type="match status" value="1"/>
</dbReference>
<dbReference type="PANTHER" id="PTHR48109">
    <property type="entry name" value="DIHYDROOROTATE DEHYDROGENASE (QUINONE), MITOCHONDRIAL-RELATED"/>
    <property type="match status" value="1"/>
</dbReference>
<dbReference type="Pfam" id="PF01180">
    <property type="entry name" value="DHO_dh"/>
    <property type="match status" value="1"/>
</dbReference>
<dbReference type="SUPFAM" id="SSF51395">
    <property type="entry name" value="FMN-linked oxidoreductases"/>
    <property type="match status" value="1"/>
</dbReference>
<dbReference type="PROSITE" id="PS00911">
    <property type="entry name" value="DHODEHASE_1"/>
    <property type="match status" value="1"/>
</dbReference>
<dbReference type="PROSITE" id="PS00912">
    <property type="entry name" value="DHODEHASE_2"/>
    <property type="match status" value="1"/>
</dbReference>
<keyword id="KW-1003">Cell membrane</keyword>
<keyword id="KW-0285">Flavoprotein</keyword>
<keyword id="KW-0288">FMN</keyword>
<keyword id="KW-0472">Membrane</keyword>
<keyword id="KW-0560">Oxidoreductase</keyword>
<keyword id="KW-0665">Pyrimidine biosynthesis</keyword>
<keyword id="KW-1185">Reference proteome</keyword>
<protein>
    <recommendedName>
        <fullName evidence="1">Dihydroorotate dehydrogenase (quinone)</fullName>
        <ecNumber evidence="1">1.3.5.2</ecNumber>
    </recommendedName>
    <alternativeName>
        <fullName evidence="1">DHOdehase</fullName>
        <shortName evidence="1">DHOD</shortName>
        <shortName evidence="1">DHODase</shortName>
    </alternativeName>
    <alternativeName>
        <fullName evidence="1">Dihydroorotate oxidase</fullName>
    </alternativeName>
</protein>
<organism>
    <name type="scientific">Rhizobium etli (strain ATCC 51251 / DSM 11541 / JCM 21823 / NBRC 15573 / CFN 42)</name>
    <dbReference type="NCBI Taxonomy" id="347834"/>
    <lineage>
        <taxon>Bacteria</taxon>
        <taxon>Pseudomonadati</taxon>
        <taxon>Pseudomonadota</taxon>
        <taxon>Alphaproteobacteria</taxon>
        <taxon>Hyphomicrobiales</taxon>
        <taxon>Rhizobiaceae</taxon>
        <taxon>Rhizobium/Agrobacterium group</taxon>
        <taxon>Rhizobium</taxon>
    </lineage>
</organism>